<dbReference type="EMBL" id="CU329671">
    <property type="protein sequence ID" value="CAB59805.1"/>
    <property type="molecule type" value="Genomic_DNA"/>
</dbReference>
<dbReference type="PIR" id="T39330">
    <property type="entry name" value="T39330"/>
</dbReference>
<dbReference type="RefSeq" id="NP_595721.1">
    <property type="nucleotide sequence ID" value="NM_001021619.2"/>
</dbReference>
<dbReference type="PDB" id="8ESQ">
    <property type="method" value="EM"/>
    <property type="resolution" value="2.80 A"/>
    <property type="chains" value="W=1-241"/>
</dbReference>
<dbReference type="PDB" id="8ESR">
    <property type="method" value="EM"/>
    <property type="resolution" value="3.20 A"/>
    <property type="chains" value="W=1-241"/>
</dbReference>
<dbReference type="PDB" id="8ETC">
    <property type="method" value="EM"/>
    <property type="resolution" value="3.10 A"/>
    <property type="chains" value="W=1-241"/>
</dbReference>
<dbReference type="PDB" id="8ETG">
    <property type="method" value="EM"/>
    <property type="resolution" value="3.40 A"/>
    <property type="chains" value="W=1-241"/>
</dbReference>
<dbReference type="PDB" id="8ETI">
    <property type="method" value="EM"/>
    <property type="resolution" value="3.70 A"/>
    <property type="chains" value="W=1-241"/>
</dbReference>
<dbReference type="PDB" id="8ETJ">
    <property type="method" value="EM"/>
    <property type="resolution" value="3.20 A"/>
    <property type="chains" value="W=1-241"/>
</dbReference>
<dbReference type="PDBsum" id="8ESQ"/>
<dbReference type="PDBsum" id="8ESR"/>
<dbReference type="PDBsum" id="8ETC"/>
<dbReference type="PDBsum" id="8ETG"/>
<dbReference type="PDBsum" id="8ETI"/>
<dbReference type="PDBsum" id="8ETJ"/>
<dbReference type="SMR" id="Q9USZ6"/>
<dbReference type="BioGRID" id="276457">
    <property type="interactions" value="27"/>
</dbReference>
<dbReference type="FunCoup" id="Q9USZ6">
    <property type="interactions" value="773"/>
</dbReference>
<dbReference type="STRING" id="284812.Q9USZ6"/>
<dbReference type="iPTMnet" id="Q9USZ6"/>
<dbReference type="PaxDb" id="4896-SPBC11G11.03.1"/>
<dbReference type="EnsemblFungi" id="SPBC11G11.03.1">
    <property type="protein sequence ID" value="SPBC11G11.03.1:pep"/>
    <property type="gene ID" value="SPBC11G11.03"/>
</dbReference>
<dbReference type="GeneID" id="2539913"/>
<dbReference type="KEGG" id="spo:2539913"/>
<dbReference type="PomBase" id="SPBC11G11.03">
    <property type="gene designation" value="mrt4"/>
</dbReference>
<dbReference type="VEuPathDB" id="FungiDB:SPBC11G11.03"/>
<dbReference type="eggNOG" id="KOG0816">
    <property type="taxonomic scope" value="Eukaryota"/>
</dbReference>
<dbReference type="HOGENOM" id="CLU_071690_0_0_1"/>
<dbReference type="InParanoid" id="Q9USZ6"/>
<dbReference type="OMA" id="LEWAENY"/>
<dbReference type="PhylomeDB" id="Q9USZ6"/>
<dbReference type="PRO" id="PR:Q9USZ6"/>
<dbReference type="Proteomes" id="UP000002485">
    <property type="component" value="Chromosome II"/>
</dbReference>
<dbReference type="GO" id="GO:0005737">
    <property type="term" value="C:cytoplasm"/>
    <property type="evidence" value="ECO:0007669"/>
    <property type="project" value="UniProtKB-SubCell"/>
</dbReference>
<dbReference type="GO" id="GO:0005730">
    <property type="term" value="C:nucleolus"/>
    <property type="evidence" value="ECO:0007005"/>
    <property type="project" value="PomBase"/>
</dbReference>
<dbReference type="GO" id="GO:0005634">
    <property type="term" value="C:nucleus"/>
    <property type="evidence" value="ECO:0007005"/>
    <property type="project" value="PomBase"/>
</dbReference>
<dbReference type="GO" id="GO:0030684">
    <property type="term" value="C:preribosome"/>
    <property type="evidence" value="ECO:0000314"/>
    <property type="project" value="PomBase"/>
</dbReference>
<dbReference type="GO" id="GO:0030687">
    <property type="term" value="C:preribosome, large subunit precursor"/>
    <property type="evidence" value="ECO:0000318"/>
    <property type="project" value="GO_Central"/>
</dbReference>
<dbReference type="GO" id="GO:1902626">
    <property type="term" value="P:assembly of large subunit precursor of preribosome"/>
    <property type="evidence" value="ECO:0000269"/>
    <property type="project" value="PomBase"/>
</dbReference>
<dbReference type="GO" id="GO:0180023">
    <property type="term" value="P:cytosolic large ribosomal subunit assembly"/>
    <property type="evidence" value="ECO:0000266"/>
    <property type="project" value="PomBase"/>
</dbReference>
<dbReference type="GO" id="GO:0000956">
    <property type="term" value="P:nuclear-transcribed mRNA catabolic process"/>
    <property type="evidence" value="ECO:0000318"/>
    <property type="project" value="GO_Central"/>
</dbReference>
<dbReference type="GO" id="GO:0042273">
    <property type="term" value="P:ribosomal large subunit biogenesis"/>
    <property type="evidence" value="ECO:0000318"/>
    <property type="project" value="GO_Central"/>
</dbReference>
<dbReference type="GO" id="GO:0006364">
    <property type="term" value="P:rRNA processing"/>
    <property type="evidence" value="ECO:0000318"/>
    <property type="project" value="GO_Central"/>
</dbReference>
<dbReference type="CDD" id="cd05796">
    <property type="entry name" value="Ribosomal_P0_like"/>
    <property type="match status" value="1"/>
</dbReference>
<dbReference type="FunFam" id="3.30.70.1730:FF:000005">
    <property type="entry name" value="Ribosome assembly factor mrt4"/>
    <property type="match status" value="1"/>
</dbReference>
<dbReference type="FunFam" id="3.90.105.20:FF:000003">
    <property type="entry name" value="Ribosome assembly factor mrt4"/>
    <property type="match status" value="1"/>
</dbReference>
<dbReference type="Gene3D" id="3.30.70.1730">
    <property type="match status" value="1"/>
</dbReference>
<dbReference type="Gene3D" id="3.90.105.20">
    <property type="match status" value="1"/>
</dbReference>
<dbReference type="InterPro" id="IPR033867">
    <property type="entry name" value="Mrt4"/>
</dbReference>
<dbReference type="InterPro" id="IPR001790">
    <property type="entry name" value="Ribosomal_uL10"/>
</dbReference>
<dbReference type="InterPro" id="IPR040637">
    <property type="entry name" value="Ribosomal_uL10-like_insert"/>
</dbReference>
<dbReference type="InterPro" id="IPR043164">
    <property type="entry name" value="Ribosomal_uL10-like_insert_sf"/>
</dbReference>
<dbReference type="InterPro" id="IPR043141">
    <property type="entry name" value="Ribosomal_uL10-like_sf"/>
</dbReference>
<dbReference type="InterPro" id="IPR051742">
    <property type="entry name" value="Ribosome_Assembly_uL10"/>
</dbReference>
<dbReference type="PANTHER" id="PTHR45841:SF1">
    <property type="entry name" value="MRNA TURNOVER PROTEIN 4 HOMOLOG"/>
    <property type="match status" value="1"/>
</dbReference>
<dbReference type="PANTHER" id="PTHR45841">
    <property type="entry name" value="MRNA TURNOVER PROTEIN 4 MRTO4"/>
    <property type="match status" value="1"/>
</dbReference>
<dbReference type="Pfam" id="PF00466">
    <property type="entry name" value="Ribosomal_L10"/>
    <property type="match status" value="1"/>
</dbReference>
<dbReference type="Pfam" id="PF17777">
    <property type="entry name" value="RL10P_insert"/>
    <property type="match status" value="1"/>
</dbReference>
<dbReference type="SUPFAM" id="SSF160369">
    <property type="entry name" value="Ribosomal protein L10-like"/>
    <property type="match status" value="1"/>
</dbReference>
<sequence length="241" mass="26664">MPKSRRSKVLTLAQTEKKGHEGKAALFSGVQQSLDSFDYMWIFDVTNMRNTYLKRIRDDWKGSRIFMGKTKVMAKALGHTPEEEHAENVSKLTKLLHGAVGLLFTNSKPDEVIGYFESFVQNDFARAGAVAPFTHVIPAGPVYSRAGQIPVEDDILLTHTLEPQVRQLGMPTVLKNGVVTLLADFPLCTEGQQLDSRQTRLLKLFGITAAEFKVGLLGYYSKKGASVEFLQSAPGADEAME</sequence>
<feature type="chain" id="PRO_0000154814" description="Ribosome assembly factor mrt4">
    <location>
        <begin position="1"/>
        <end position="241"/>
    </location>
</feature>
<feature type="helix" evidence="5">
    <location>
        <begin position="20"/>
        <end position="34"/>
    </location>
</feature>
<feature type="strand" evidence="6">
    <location>
        <begin position="36"/>
        <end position="38"/>
    </location>
</feature>
<feature type="helix" evidence="5">
    <location>
        <begin position="50"/>
        <end position="58"/>
    </location>
</feature>
<feature type="helix" evidence="5">
    <location>
        <begin position="72"/>
        <end position="77"/>
    </location>
</feature>
<feature type="turn" evidence="5">
    <location>
        <begin position="81"/>
        <end position="83"/>
    </location>
</feature>
<feature type="strand" evidence="5">
    <location>
        <begin position="85"/>
        <end position="88"/>
    </location>
</feature>
<feature type="helix" evidence="5">
    <location>
        <begin position="89"/>
        <end position="95"/>
    </location>
</feature>
<feature type="helix" evidence="5">
    <location>
        <begin position="113"/>
        <end position="118"/>
    </location>
</feature>
<feature type="strand" evidence="6">
    <location>
        <begin position="129"/>
        <end position="133"/>
    </location>
</feature>
<feature type="strand" evidence="6">
    <location>
        <begin position="135"/>
        <end position="137"/>
    </location>
</feature>
<feature type="strand" evidence="5">
    <location>
        <begin position="139"/>
        <end position="141"/>
    </location>
</feature>
<feature type="turn" evidence="5">
    <location>
        <begin position="144"/>
        <end position="147"/>
    </location>
</feature>
<feature type="helix" evidence="5">
    <location>
        <begin position="162"/>
        <end position="168"/>
    </location>
</feature>
<feature type="strand" evidence="5">
    <location>
        <begin position="170"/>
        <end position="175"/>
    </location>
</feature>
<feature type="strand" evidence="5">
    <location>
        <begin position="178"/>
        <end position="183"/>
    </location>
</feature>
<feature type="strand" evidence="6">
    <location>
        <begin position="185"/>
        <end position="188"/>
    </location>
</feature>
<feature type="helix" evidence="5">
    <location>
        <begin position="196"/>
        <end position="203"/>
    </location>
</feature>
<feature type="turn" evidence="5">
    <location>
        <begin position="204"/>
        <end position="206"/>
    </location>
</feature>
<feature type="strand" evidence="5">
    <location>
        <begin position="222"/>
        <end position="224"/>
    </location>
</feature>
<protein>
    <recommendedName>
        <fullName evidence="1">Ribosome assembly factor mrt4</fullName>
    </recommendedName>
    <alternativeName>
        <fullName evidence="1">mRNA turnover protein 4</fullName>
    </alternativeName>
</protein>
<proteinExistence type="evidence at protein level"/>
<keyword id="KW-0002">3D-structure</keyword>
<keyword id="KW-0963">Cytoplasm</keyword>
<keyword id="KW-0539">Nucleus</keyword>
<keyword id="KW-1185">Reference proteome</keyword>
<keyword id="KW-0690">Ribosome biogenesis</keyword>
<accession>Q9USZ6</accession>
<name>MRT4_SCHPO</name>
<gene>
    <name evidence="1" type="primary">mrt4</name>
    <name evidence="4" type="ORF">SPBC11G11.03</name>
</gene>
<organism>
    <name type="scientific">Schizosaccharomyces pombe (strain 972 / ATCC 24843)</name>
    <name type="common">Fission yeast</name>
    <dbReference type="NCBI Taxonomy" id="284812"/>
    <lineage>
        <taxon>Eukaryota</taxon>
        <taxon>Fungi</taxon>
        <taxon>Dikarya</taxon>
        <taxon>Ascomycota</taxon>
        <taxon>Taphrinomycotina</taxon>
        <taxon>Schizosaccharomycetes</taxon>
        <taxon>Schizosaccharomycetales</taxon>
        <taxon>Schizosaccharomycetaceae</taxon>
        <taxon>Schizosaccharomyces</taxon>
    </lineage>
</organism>
<evidence type="ECO:0000250" key="1">
    <source>
        <dbReference type="UniProtKB" id="P33201"/>
    </source>
</evidence>
<evidence type="ECO:0000269" key="2">
    <source>
    </source>
</evidence>
<evidence type="ECO:0000305" key="3"/>
<evidence type="ECO:0000312" key="4">
    <source>
        <dbReference type="PomBase" id="SPBC11G11.03"/>
    </source>
</evidence>
<evidence type="ECO:0007829" key="5">
    <source>
        <dbReference type="PDB" id="8ETC"/>
    </source>
</evidence>
<evidence type="ECO:0007829" key="6">
    <source>
        <dbReference type="PDB" id="8ETJ"/>
    </source>
</evidence>
<comment type="function">
    <text evidence="1">Component of the ribosome assembly machinery. Nuclear paralog of the ribosomal protein P0, it binds pre-60S subunits at an early stage of assembly in the nucleolus, and is replaced by P0 in cytoplasmic pre-60S subunits and mature 80S ribosomes.</text>
</comment>
<comment type="subunit">
    <text evidence="1">Associates with the pre-60S ribosomal particle.</text>
</comment>
<comment type="subcellular location">
    <subcellularLocation>
        <location evidence="2">Nucleus</location>
        <location evidence="2">Nucleolus</location>
    </subcellularLocation>
    <subcellularLocation>
        <location evidence="1">Cytoplasm</location>
    </subcellularLocation>
    <text evidence="1">Shuttles between the nucleus and the cytoplasm.</text>
</comment>
<comment type="similarity">
    <text evidence="3">Belongs to the universal ribosomal protein uL10 family.</text>
</comment>
<reference key="1">
    <citation type="journal article" date="2002" name="Nature">
        <title>The genome sequence of Schizosaccharomyces pombe.</title>
        <authorList>
            <person name="Wood V."/>
            <person name="Gwilliam R."/>
            <person name="Rajandream M.A."/>
            <person name="Lyne M.H."/>
            <person name="Lyne R."/>
            <person name="Stewart A."/>
            <person name="Sgouros J.G."/>
            <person name="Peat N."/>
            <person name="Hayles J."/>
            <person name="Baker S.G."/>
            <person name="Basham D."/>
            <person name="Bowman S."/>
            <person name="Brooks K."/>
            <person name="Brown D."/>
            <person name="Brown S."/>
            <person name="Chillingworth T."/>
            <person name="Churcher C.M."/>
            <person name="Collins M."/>
            <person name="Connor R."/>
            <person name="Cronin A."/>
            <person name="Davis P."/>
            <person name="Feltwell T."/>
            <person name="Fraser A."/>
            <person name="Gentles S."/>
            <person name="Goble A."/>
            <person name="Hamlin N."/>
            <person name="Harris D.E."/>
            <person name="Hidalgo J."/>
            <person name="Hodgson G."/>
            <person name="Holroyd S."/>
            <person name="Hornsby T."/>
            <person name="Howarth S."/>
            <person name="Huckle E.J."/>
            <person name="Hunt S."/>
            <person name="Jagels K."/>
            <person name="James K.D."/>
            <person name="Jones L."/>
            <person name="Jones M."/>
            <person name="Leather S."/>
            <person name="McDonald S."/>
            <person name="McLean J."/>
            <person name="Mooney P."/>
            <person name="Moule S."/>
            <person name="Mungall K.L."/>
            <person name="Murphy L.D."/>
            <person name="Niblett D."/>
            <person name="Odell C."/>
            <person name="Oliver K."/>
            <person name="O'Neil S."/>
            <person name="Pearson D."/>
            <person name="Quail M.A."/>
            <person name="Rabbinowitsch E."/>
            <person name="Rutherford K.M."/>
            <person name="Rutter S."/>
            <person name="Saunders D."/>
            <person name="Seeger K."/>
            <person name="Sharp S."/>
            <person name="Skelton J."/>
            <person name="Simmonds M.N."/>
            <person name="Squares R."/>
            <person name="Squares S."/>
            <person name="Stevens K."/>
            <person name="Taylor K."/>
            <person name="Taylor R.G."/>
            <person name="Tivey A."/>
            <person name="Walsh S.V."/>
            <person name="Warren T."/>
            <person name="Whitehead S."/>
            <person name="Woodward J.R."/>
            <person name="Volckaert G."/>
            <person name="Aert R."/>
            <person name="Robben J."/>
            <person name="Grymonprez B."/>
            <person name="Weltjens I."/>
            <person name="Vanstreels E."/>
            <person name="Rieger M."/>
            <person name="Schaefer M."/>
            <person name="Mueller-Auer S."/>
            <person name="Gabel C."/>
            <person name="Fuchs M."/>
            <person name="Duesterhoeft A."/>
            <person name="Fritzc C."/>
            <person name="Holzer E."/>
            <person name="Moestl D."/>
            <person name="Hilbert H."/>
            <person name="Borzym K."/>
            <person name="Langer I."/>
            <person name="Beck A."/>
            <person name="Lehrach H."/>
            <person name="Reinhardt R."/>
            <person name="Pohl T.M."/>
            <person name="Eger P."/>
            <person name="Zimmermann W."/>
            <person name="Wedler H."/>
            <person name="Wambutt R."/>
            <person name="Purnelle B."/>
            <person name="Goffeau A."/>
            <person name="Cadieu E."/>
            <person name="Dreano S."/>
            <person name="Gloux S."/>
            <person name="Lelaure V."/>
            <person name="Mottier S."/>
            <person name="Galibert F."/>
            <person name="Aves S.J."/>
            <person name="Xiang Z."/>
            <person name="Hunt C."/>
            <person name="Moore K."/>
            <person name="Hurst S.M."/>
            <person name="Lucas M."/>
            <person name="Rochet M."/>
            <person name="Gaillardin C."/>
            <person name="Tallada V.A."/>
            <person name="Garzon A."/>
            <person name="Thode G."/>
            <person name="Daga R.R."/>
            <person name="Cruzado L."/>
            <person name="Jimenez J."/>
            <person name="Sanchez M."/>
            <person name="del Rey F."/>
            <person name="Benito J."/>
            <person name="Dominguez A."/>
            <person name="Revuelta J.L."/>
            <person name="Moreno S."/>
            <person name="Armstrong J."/>
            <person name="Forsburg S.L."/>
            <person name="Cerutti L."/>
            <person name="Lowe T."/>
            <person name="McCombie W.R."/>
            <person name="Paulsen I."/>
            <person name="Potashkin J."/>
            <person name="Shpakovski G.V."/>
            <person name="Ussery D."/>
            <person name="Barrell B.G."/>
            <person name="Nurse P."/>
        </authorList>
    </citation>
    <scope>NUCLEOTIDE SEQUENCE [LARGE SCALE GENOMIC DNA]</scope>
    <source>
        <strain>972 / ATCC 24843</strain>
    </source>
</reference>
<reference key="2">
    <citation type="journal article" date="2006" name="Nat. Biotechnol.">
        <title>ORFeome cloning and global analysis of protein localization in the fission yeast Schizosaccharomyces pombe.</title>
        <authorList>
            <person name="Matsuyama A."/>
            <person name="Arai R."/>
            <person name="Yashiroda Y."/>
            <person name="Shirai A."/>
            <person name="Kamata A."/>
            <person name="Sekido S."/>
            <person name="Kobayashi Y."/>
            <person name="Hashimoto A."/>
            <person name="Hamamoto M."/>
            <person name="Hiraoka Y."/>
            <person name="Horinouchi S."/>
            <person name="Yoshida M."/>
        </authorList>
    </citation>
    <scope>SUBCELLULAR LOCATION [LARGE SCALE ANALYSIS]</scope>
</reference>